<dbReference type="EC" id="2.7.2.3" evidence="1"/>
<dbReference type="EMBL" id="CP000656">
    <property type="protein sequence ID" value="ABP46181.1"/>
    <property type="molecule type" value="Genomic_DNA"/>
</dbReference>
<dbReference type="SMR" id="A4TC15"/>
<dbReference type="STRING" id="350054.Mflv_3709"/>
<dbReference type="KEGG" id="mgi:Mflv_3709"/>
<dbReference type="eggNOG" id="COG0126">
    <property type="taxonomic scope" value="Bacteria"/>
</dbReference>
<dbReference type="HOGENOM" id="CLU_025427_0_2_11"/>
<dbReference type="OrthoDB" id="9808460at2"/>
<dbReference type="UniPathway" id="UPA00109">
    <property type="reaction ID" value="UER00185"/>
</dbReference>
<dbReference type="GO" id="GO:0005829">
    <property type="term" value="C:cytosol"/>
    <property type="evidence" value="ECO:0007669"/>
    <property type="project" value="TreeGrafter"/>
</dbReference>
<dbReference type="GO" id="GO:0043531">
    <property type="term" value="F:ADP binding"/>
    <property type="evidence" value="ECO:0007669"/>
    <property type="project" value="TreeGrafter"/>
</dbReference>
<dbReference type="GO" id="GO:0005524">
    <property type="term" value="F:ATP binding"/>
    <property type="evidence" value="ECO:0007669"/>
    <property type="project" value="UniProtKB-KW"/>
</dbReference>
<dbReference type="GO" id="GO:0004618">
    <property type="term" value="F:phosphoglycerate kinase activity"/>
    <property type="evidence" value="ECO:0007669"/>
    <property type="project" value="UniProtKB-UniRule"/>
</dbReference>
<dbReference type="GO" id="GO:0006094">
    <property type="term" value="P:gluconeogenesis"/>
    <property type="evidence" value="ECO:0007669"/>
    <property type="project" value="TreeGrafter"/>
</dbReference>
<dbReference type="GO" id="GO:0006096">
    <property type="term" value="P:glycolytic process"/>
    <property type="evidence" value="ECO:0007669"/>
    <property type="project" value="UniProtKB-UniRule"/>
</dbReference>
<dbReference type="CDD" id="cd00318">
    <property type="entry name" value="Phosphoglycerate_kinase"/>
    <property type="match status" value="1"/>
</dbReference>
<dbReference type="FunFam" id="3.40.50.1260:FF:000003">
    <property type="entry name" value="Phosphoglycerate kinase"/>
    <property type="match status" value="1"/>
</dbReference>
<dbReference type="FunFam" id="3.40.50.1260:FF:000006">
    <property type="entry name" value="Phosphoglycerate kinase"/>
    <property type="match status" value="1"/>
</dbReference>
<dbReference type="Gene3D" id="3.40.50.1260">
    <property type="entry name" value="Phosphoglycerate kinase, N-terminal domain"/>
    <property type="match status" value="2"/>
</dbReference>
<dbReference type="HAMAP" id="MF_00145">
    <property type="entry name" value="Phosphoglyc_kinase"/>
    <property type="match status" value="1"/>
</dbReference>
<dbReference type="InterPro" id="IPR001576">
    <property type="entry name" value="Phosphoglycerate_kinase"/>
</dbReference>
<dbReference type="InterPro" id="IPR015911">
    <property type="entry name" value="Phosphoglycerate_kinase_CS"/>
</dbReference>
<dbReference type="InterPro" id="IPR015824">
    <property type="entry name" value="Phosphoglycerate_kinase_N"/>
</dbReference>
<dbReference type="InterPro" id="IPR036043">
    <property type="entry name" value="Phosphoglycerate_kinase_sf"/>
</dbReference>
<dbReference type="PANTHER" id="PTHR11406">
    <property type="entry name" value="PHOSPHOGLYCERATE KINASE"/>
    <property type="match status" value="1"/>
</dbReference>
<dbReference type="PANTHER" id="PTHR11406:SF23">
    <property type="entry name" value="PHOSPHOGLYCERATE KINASE 1, CHLOROPLASTIC-RELATED"/>
    <property type="match status" value="1"/>
</dbReference>
<dbReference type="Pfam" id="PF00162">
    <property type="entry name" value="PGK"/>
    <property type="match status" value="1"/>
</dbReference>
<dbReference type="PIRSF" id="PIRSF000724">
    <property type="entry name" value="Pgk"/>
    <property type="match status" value="1"/>
</dbReference>
<dbReference type="PRINTS" id="PR00477">
    <property type="entry name" value="PHGLYCKINASE"/>
</dbReference>
<dbReference type="SUPFAM" id="SSF53748">
    <property type="entry name" value="Phosphoglycerate kinase"/>
    <property type="match status" value="1"/>
</dbReference>
<dbReference type="PROSITE" id="PS00111">
    <property type="entry name" value="PGLYCERATE_KINASE"/>
    <property type="match status" value="1"/>
</dbReference>
<protein>
    <recommendedName>
        <fullName evidence="1">Phosphoglycerate kinase</fullName>
        <ecNumber evidence="1">2.7.2.3</ecNumber>
    </recommendedName>
</protein>
<feature type="chain" id="PRO_1000076594" description="Phosphoglycerate kinase">
    <location>
        <begin position="1"/>
        <end position="402"/>
    </location>
</feature>
<feature type="binding site" evidence="1">
    <location>
        <begin position="24"/>
        <end position="26"/>
    </location>
    <ligand>
        <name>substrate</name>
    </ligand>
</feature>
<feature type="binding site" evidence="1">
    <location>
        <position position="39"/>
    </location>
    <ligand>
        <name>substrate</name>
    </ligand>
</feature>
<feature type="binding site" evidence="1">
    <location>
        <begin position="62"/>
        <end position="65"/>
    </location>
    <ligand>
        <name>substrate</name>
    </ligand>
</feature>
<feature type="binding site" evidence="1">
    <location>
        <position position="121"/>
    </location>
    <ligand>
        <name>substrate</name>
    </ligand>
</feature>
<feature type="binding site" evidence="1">
    <location>
        <position position="161"/>
    </location>
    <ligand>
        <name>substrate</name>
    </ligand>
</feature>
<feature type="binding site" evidence="1">
    <location>
        <position position="211"/>
    </location>
    <ligand>
        <name>ATP</name>
        <dbReference type="ChEBI" id="CHEBI:30616"/>
    </ligand>
</feature>
<feature type="binding site" evidence="1">
    <location>
        <position position="299"/>
    </location>
    <ligand>
        <name>ATP</name>
        <dbReference type="ChEBI" id="CHEBI:30616"/>
    </ligand>
</feature>
<feature type="binding site" evidence="1">
    <location>
        <position position="330"/>
    </location>
    <ligand>
        <name>ATP</name>
        <dbReference type="ChEBI" id="CHEBI:30616"/>
    </ligand>
</feature>
<feature type="binding site" evidence="1">
    <location>
        <begin position="359"/>
        <end position="362"/>
    </location>
    <ligand>
        <name>ATP</name>
        <dbReference type="ChEBI" id="CHEBI:30616"/>
    </ligand>
</feature>
<organism>
    <name type="scientific">Mycolicibacterium gilvum (strain PYR-GCK)</name>
    <name type="common">Mycobacterium gilvum (strain PYR-GCK)</name>
    <dbReference type="NCBI Taxonomy" id="350054"/>
    <lineage>
        <taxon>Bacteria</taxon>
        <taxon>Bacillati</taxon>
        <taxon>Actinomycetota</taxon>
        <taxon>Actinomycetes</taxon>
        <taxon>Mycobacteriales</taxon>
        <taxon>Mycobacteriaceae</taxon>
        <taxon>Mycolicibacterium</taxon>
    </lineage>
</organism>
<keyword id="KW-0067">ATP-binding</keyword>
<keyword id="KW-0963">Cytoplasm</keyword>
<keyword id="KW-0324">Glycolysis</keyword>
<keyword id="KW-0418">Kinase</keyword>
<keyword id="KW-0547">Nucleotide-binding</keyword>
<keyword id="KW-0808">Transferase</keyword>
<comment type="catalytic activity">
    <reaction evidence="1">
        <text>(2R)-3-phosphoglycerate + ATP = (2R)-3-phospho-glyceroyl phosphate + ADP</text>
        <dbReference type="Rhea" id="RHEA:14801"/>
        <dbReference type="ChEBI" id="CHEBI:30616"/>
        <dbReference type="ChEBI" id="CHEBI:57604"/>
        <dbReference type="ChEBI" id="CHEBI:58272"/>
        <dbReference type="ChEBI" id="CHEBI:456216"/>
        <dbReference type="EC" id="2.7.2.3"/>
    </reaction>
</comment>
<comment type="pathway">
    <text evidence="1">Carbohydrate degradation; glycolysis; pyruvate from D-glyceraldehyde 3-phosphate: step 2/5.</text>
</comment>
<comment type="subunit">
    <text evidence="1">Monomer.</text>
</comment>
<comment type="subcellular location">
    <subcellularLocation>
        <location evidence="1">Cytoplasm</location>
    </subcellularLocation>
</comment>
<comment type="similarity">
    <text evidence="1">Belongs to the phosphoglycerate kinase family.</text>
</comment>
<accession>A4TC15</accession>
<reference key="1">
    <citation type="submission" date="2007-04" db="EMBL/GenBank/DDBJ databases">
        <title>Complete sequence of chromosome of Mycobacterium gilvum PYR-GCK.</title>
        <authorList>
            <consortium name="US DOE Joint Genome Institute"/>
            <person name="Copeland A."/>
            <person name="Lucas S."/>
            <person name="Lapidus A."/>
            <person name="Barry K."/>
            <person name="Detter J.C."/>
            <person name="Glavina del Rio T."/>
            <person name="Hammon N."/>
            <person name="Israni S."/>
            <person name="Dalin E."/>
            <person name="Tice H."/>
            <person name="Pitluck S."/>
            <person name="Chain P."/>
            <person name="Malfatti S."/>
            <person name="Shin M."/>
            <person name="Vergez L."/>
            <person name="Schmutz J."/>
            <person name="Larimer F."/>
            <person name="Land M."/>
            <person name="Hauser L."/>
            <person name="Kyrpides N."/>
            <person name="Mikhailova N."/>
            <person name="Miller C."/>
            <person name="Richardson P."/>
        </authorList>
    </citation>
    <scope>NUCLEOTIDE SEQUENCE [LARGE SCALE GENOMIC DNA]</scope>
    <source>
        <strain>PYR-GCK</strain>
    </source>
</reference>
<gene>
    <name evidence="1" type="primary">pgk</name>
    <name type="ordered locus">Mflv_3709</name>
</gene>
<evidence type="ECO:0000255" key="1">
    <source>
        <dbReference type="HAMAP-Rule" id="MF_00145"/>
    </source>
</evidence>
<proteinExistence type="inferred from homology"/>
<sequence length="402" mass="41562">MGIKSLDDLLAEGVSGRGVLVRSDLNVPLDGGSITDPGRIIASVPTLKALSDAGAKVVVTAHLGRPKGEPDPKFSLAPVGAALGEKLGRHVQLAGDVVGSDALARAEGLTDGDILLLENIRFDGRETSKDDAERLKLAKALVELVGDDGAFVSDGFGVVHRKQASVYDVATLLPHYAGTLVDTEVKVLAQLTESTERPYAVVLGGSKVSDKLAVIENLATKADSLIIGGGMCFTFLAAQGLSVGSSLLEESMIDTCRTLLDDYGDVLHLPVDIVVAEKFSADSEPQTVAADKIPDDKMGLDIGPESVRRFSALLSNAKTIFWNGPMGVFEFPAFAAGTKGVAEAIIGATGKGAFSVVGGGDSAAAVRQLGLPEDGFSHISTGGGASLEYLEGKELPGIEVLN</sequence>
<name>PGK_MYCGI</name>